<sequence>MFALDSIVGKHINYALDKTQHLPNKIMNNITNTEITLQDYQYFVSRIFIGLKNLNSMLLFWDTGMGKTLTAVYIIKYIKELFPRWIILIFIKKSLYIDPWLNTIRSYISDTSNIKFIYYDSSSSLDKFNNIYRSIESSLNKKSRLLIIIDEVHKLISRTVKKDNNERNFTPIYKKLIKLANFENNKILCMSATPVTNNISEFNNLIGLLRPNVMNIKEEYINNGKLINFKELRETLLAICSYKRLIEADSLTETNYIDGYAKKNIFYHNIIMSDEQSKLYNMAEKYDYKTELGGLKTMRRLISSFAFYDLKIKGDLDNIEYNDMIKRKLAEFSEFTKNINFSESFIESFKNDNIKIKTNLPITDINNYNILYQYSCKYIETCKIILNSRGKVLIFEPLVNFEGISSLKCYFNCFNISYIEYSSKTLKTRDNELNEYNNYENNNGKKVKVCIFSYAGSEGISFKCINDIIILDMPWNESELKQIIGRSIRLNSHKDLPQEYRYVNVHFLISYTNNRKSVDKEILDIIKDKQGKINVIFDLLKSSSIESIHNTYKYIEPAENEIIFDTIRKTRMKEMNVSNVIINIKLYPISYCKDYDRATILKGLLNKDTNIVYKDNTAVAKLMIDKDNIPIFIIENDTLIYIADDYYE</sequence>
<feature type="chain" id="PRO_0000099099" description="Nucleoside triphosphatase I">
    <location>
        <begin position="1"/>
        <end position="648"/>
    </location>
</feature>
<feature type="domain" description="Helicase ATP-binding" evidence="2">
    <location>
        <begin position="48"/>
        <end position="212"/>
    </location>
</feature>
<feature type="domain" description="Helicase C-terminal" evidence="3">
    <location>
        <begin position="378"/>
        <end position="541"/>
    </location>
</feature>
<feature type="region of interest" description="Binding to the cap-specific mRNA (nucleoside-2'-O-)-methyltransferase" evidence="1">
    <location>
        <begin position="467"/>
        <end position="533"/>
    </location>
</feature>
<feature type="short sequence motif" description="DEXH box">
    <location>
        <begin position="150"/>
        <end position="153"/>
    </location>
</feature>
<feature type="binding site" evidence="2">
    <location>
        <begin position="61"/>
        <end position="68"/>
    </location>
    <ligand>
        <name>ATP</name>
        <dbReference type="ChEBI" id="CHEBI:30616"/>
    </ligand>
</feature>
<protein>
    <recommendedName>
        <fullName>Nucleoside triphosphatase I</fullName>
        <ecNumber>3.6.1.15</ecNumber>
    </recommendedName>
    <alternativeName>
        <fullName>NPH-I</fullName>
    </alternativeName>
    <alternativeName>
        <fullName>Nucleoside triphosphate phosphohydrolase I</fullName>
        <shortName>NPH I</shortName>
    </alternativeName>
</protein>
<dbReference type="EC" id="3.6.1.15"/>
<dbReference type="EMBL" id="AF250284">
    <property type="protein sequence ID" value="AAG02898.1"/>
    <property type="molecule type" value="Genomic_DNA"/>
</dbReference>
<dbReference type="EMBL" id="M77182">
    <property type="protein sequence ID" value="AAA42384.1"/>
    <property type="molecule type" value="Genomic_DNA"/>
</dbReference>
<dbReference type="PIR" id="F41561">
    <property type="entry name" value="NPVZAM"/>
</dbReference>
<dbReference type="RefSeq" id="NP_064974.1">
    <property type="nucleotide sequence ID" value="NC_002520.1"/>
</dbReference>
<dbReference type="SMR" id="P29814"/>
<dbReference type="GeneID" id="1494782"/>
<dbReference type="KEGG" id="vg:1494782"/>
<dbReference type="OrthoDB" id="1247at10239"/>
<dbReference type="Proteomes" id="UP000000872">
    <property type="component" value="Genome"/>
</dbReference>
<dbReference type="GO" id="GO:0044423">
    <property type="term" value="C:virion component"/>
    <property type="evidence" value="ECO:0007669"/>
    <property type="project" value="UniProtKB-KW"/>
</dbReference>
<dbReference type="GO" id="GO:0005524">
    <property type="term" value="F:ATP binding"/>
    <property type="evidence" value="ECO:0007669"/>
    <property type="project" value="UniProtKB-KW"/>
</dbReference>
<dbReference type="GO" id="GO:0003677">
    <property type="term" value="F:DNA binding"/>
    <property type="evidence" value="ECO:0007669"/>
    <property type="project" value="UniProtKB-KW"/>
</dbReference>
<dbReference type="GO" id="GO:0017111">
    <property type="term" value="F:ribonucleoside triphosphate phosphatase activity"/>
    <property type="evidence" value="ECO:0007669"/>
    <property type="project" value="UniProtKB-EC"/>
</dbReference>
<dbReference type="GO" id="GO:0006351">
    <property type="term" value="P:DNA-templated transcription"/>
    <property type="evidence" value="ECO:0007669"/>
    <property type="project" value="InterPro"/>
</dbReference>
<dbReference type="Gene3D" id="3.40.50.300">
    <property type="entry name" value="P-loop containing nucleotide triphosphate hydrolases"/>
    <property type="match status" value="2"/>
</dbReference>
<dbReference type="InterPro" id="IPR014001">
    <property type="entry name" value="Helicase_ATP-bd"/>
</dbReference>
<dbReference type="InterPro" id="IPR001650">
    <property type="entry name" value="Helicase_C-like"/>
</dbReference>
<dbReference type="InterPro" id="IPR013676">
    <property type="entry name" value="NPHI_C"/>
</dbReference>
<dbReference type="InterPro" id="IPR027417">
    <property type="entry name" value="P-loop_NTPase"/>
</dbReference>
<dbReference type="InterPro" id="IPR000330">
    <property type="entry name" value="SNF2_N"/>
</dbReference>
<dbReference type="PANTHER" id="PTHR10799">
    <property type="entry name" value="SNF2/RAD54 HELICASE FAMILY"/>
    <property type="match status" value="1"/>
</dbReference>
<dbReference type="Pfam" id="PF00271">
    <property type="entry name" value="Helicase_C"/>
    <property type="match status" value="1"/>
</dbReference>
<dbReference type="Pfam" id="PF08469">
    <property type="entry name" value="NPHI_C"/>
    <property type="match status" value="1"/>
</dbReference>
<dbReference type="Pfam" id="PF00176">
    <property type="entry name" value="SNF2-rel_dom"/>
    <property type="match status" value="1"/>
</dbReference>
<dbReference type="SMART" id="SM00487">
    <property type="entry name" value="DEXDc"/>
    <property type="match status" value="1"/>
</dbReference>
<dbReference type="SMART" id="SM00490">
    <property type="entry name" value="HELICc"/>
    <property type="match status" value="1"/>
</dbReference>
<dbReference type="SUPFAM" id="SSF52540">
    <property type="entry name" value="P-loop containing nucleoside triphosphate hydrolases"/>
    <property type="match status" value="2"/>
</dbReference>
<dbReference type="PROSITE" id="PS51192">
    <property type="entry name" value="HELICASE_ATP_BIND_1"/>
    <property type="match status" value="1"/>
</dbReference>
<dbReference type="PROSITE" id="PS51194">
    <property type="entry name" value="HELICASE_CTER"/>
    <property type="match status" value="1"/>
</dbReference>
<accession>P29814</accession>
<proteinExistence type="inferred from homology"/>
<gene>
    <name type="primary">NPH1</name>
    <name type="ordered locus">AMV192</name>
    <name type="ORF">G6</name>
</gene>
<comment type="function">
    <text evidence="1">DNA-dependent ATPase required for providing the needed energy to achieve the termination of early transcripts. Acts in concert with the RAP94 subunit of the virion RNA polymerase and the capping enzyme/VTF to catalyze release of UUUUUNU-containing nascent RNA from the elongation complex. NPH-I must bind ssDNA in order to exhibit ATPase activity (By similarity).</text>
</comment>
<comment type="catalytic activity">
    <reaction>
        <text>a ribonucleoside 5'-triphosphate + H2O = a ribonucleoside 5'-diphosphate + phosphate + H(+)</text>
        <dbReference type="Rhea" id="RHEA:23680"/>
        <dbReference type="ChEBI" id="CHEBI:15377"/>
        <dbReference type="ChEBI" id="CHEBI:15378"/>
        <dbReference type="ChEBI" id="CHEBI:43474"/>
        <dbReference type="ChEBI" id="CHEBI:57930"/>
        <dbReference type="ChEBI" id="CHEBI:61557"/>
        <dbReference type="EC" id="3.6.1.15"/>
    </reaction>
</comment>
<comment type="subunit">
    <text evidence="1">Monomer. Interacts (via C-terminus) with RAP94 (via N-terminus). Interacts with the cap-specific mRNA (nucleoside-2'-O-)-methyltransferase (By similarity).</text>
</comment>
<comment type="subcellular location">
    <subcellularLocation>
        <location evidence="1">Virion</location>
    </subcellularLocation>
    <text evidence="1">Virion core enzyme.</text>
</comment>
<comment type="similarity">
    <text evidence="4">Belongs to the helicase family. NPH I subfamily.</text>
</comment>
<evidence type="ECO:0000250" key="1"/>
<evidence type="ECO:0000255" key="2">
    <source>
        <dbReference type="PROSITE-ProRule" id="PRU00541"/>
    </source>
</evidence>
<evidence type="ECO:0000255" key="3">
    <source>
        <dbReference type="PROSITE-ProRule" id="PRU00542"/>
    </source>
</evidence>
<evidence type="ECO:0000305" key="4"/>
<organismHost>
    <name type="scientific">Amsacta</name>
    <dbReference type="NCBI Taxonomy" id="340055"/>
</organismHost>
<reference key="1">
    <citation type="journal article" date="2000" name="Virology">
        <title>Complete genomic sequence of the Amsacta moorei entomopoxvirus: analysis and comparison with other poxviruses.</title>
        <authorList>
            <person name="Bawden A.L."/>
            <person name="Glassberg K.J."/>
            <person name="Diggans J."/>
            <person name="Shaw R."/>
            <person name="Farmerie W."/>
            <person name="Moyer R.W."/>
        </authorList>
    </citation>
    <scope>NUCLEOTIDE SEQUENCE [LARGE SCALE GENOMIC DNA]</scope>
</reference>
<reference key="2">
    <citation type="journal article" date="1993" name="Virology">
        <title>Identification of an Amsacta spheroidin-like protein within the occlusion bodies of Choristoneura entomopoxviruses.</title>
        <authorList>
            <person name="Hall R.L."/>
            <person name="Moyer R.W."/>
        </authorList>
    </citation>
    <scope>NUCLEOTIDE SEQUENCE [GENOMIC DNA] OF 1-486</scope>
</reference>
<reference key="3">
    <citation type="journal article" date="1991" name="J. Virol.">
        <title>Identification, cloning, and sequencing of a fragment of Amsacta moorei entomopoxvirus DNA containing the spheroidin gene and three vaccinia virus-related open reading frames.</title>
        <authorList>
            <person name="Hall R.L."/>
            <person name="Moyer R.W."/>
        </authorList>
    </citation>
    <scope>NUCLEOTIDE SEQUENCE [GENOMIC DNA] OF 486-648</scope>
</reference>
<name>NTP1_AMEPV</name>
<keyword id="KW-0067">ATP-binding</keyword>
<keyword id="KW-0238">DNA-binding</keyword>
<keyword id="KW-0378">Hydrolase</keyword>
<keyword id="KW-0547">Nucleotide-binding</keyword>
<keyword id="KW-1185">Reference proteome</keyword>
<keyword id="KW-0804">Transcription</keyword>
<keyword id="KW-0946">Virion</keyword>
<organism>
    <name type="scientific">Amsacta moorei entomopoxvirus</name>
    <name type="common">AmEPV</name>
    <dbReference type="NCBI Taxonomy" id="28321"/>
    <lineage>
        <taxon>Viruses</taxon>
        <taxon>Varidnaviria</taxon>
        <taxon>Bamfordvirae</taxon>
        <taxon>Nucleocytoviricota</taxon>
        <taxon>Pokkesviricetes</taxon>
        <taxon>Chitovirales</taxon>
        <taxon>Poxviridae</taxon>
        <taxon>Entomopoxvirinae</taxon>
        <taxon>Betaentomopoxvirus</taxon>
    </lineage>
</organism>